<comment type="function">
    <text>Hemocyanins are copper-containing oxygen carriers occurring freely dissolved in the hemolymph of many mollusks and arthropods.</text>
</comment>
<comment type="subcellular location">
    <subcellularLocation>
        <location>Secreted</location>
        <location>Extracellular space</location>
    </subcellularLocation>
</comment>
<comment type="tissue specificity">
    <text>Hemolymph.</text>
</comment>
<comment type="similarity">
    <text evidence="1">Belongs to the tyrosinase family. Hemocyanin subfamily.</text>
</comment>
<name>HCY6_MAJSQ</name>
<evidence type="ECO:0000305" key="1"/>
<dbReference type="GO" id="GO:0005576">
    <property type="term" value="C:extracellular region"/>
    <property type="evidence" value="ECO:0007669"/>
    <property type="project" value="UniProtKB-SubCell"/>
</dbReference>
<dbReference type="GO" id="GO:0005344">
    <property type="term" value="F:oxygen carrier activity"/>
    <property type="evidence" value="ECO:0007669"/>
    <property type="project" value="UniProtKB-KW"/>
</dbReference>
<reference evidence="1" key="1">
    <citation type="journal article" date="1999" name="Comp. Biochem. Physiol.">
        <title>Subunit composition and N-terminal analysis of arthropod hemocyanins.</title>
        <authorList>
            <person name="Stoeva S."/>
            <person name="Dolashka P."/>
            <person name="Hristova R."/>
            <person name="Genov N."/>
            <person name="Voelter W."/>
        </authorList>
    </citation>
    <scope>PROTEIN SEQUENCE</scope>
</reference>
<sequence length="21" mass="2379">GGPSQKQKQHKVNLVNIKVYI</sequence>
<proteinExistence type="evidence at protein level"/>
<keyword id="KW-0186">Copper</keyword>
<keyword id="KW-0903">Direct protein sequencing</keyword>
<keyword id="KW-0561">Oxygen transport</keyword>
<keyword id="KW-0964">Secreted</keyword>
<keyword id="KW-0813">Transport</keyword>
<protein>
    <recommendedName>
        <fullName>Hemocyanin subunit 6</fullName>
    </recommendedName>
</protein>
<feature type="chain" id="PRO_0000204288" description="Hemocyanin subunit 6">
    <location>
        <begin position="1"/>
        <end position="21" status="greater than"/>
    </location>
</feature>
<feature type="non-terminal residue" evidence="1">
    <location>
        <position position="21"/>
    </location>
</feature>
<organism evidence="1">
    <name type="scientific">Maja squinado</name>
    <name type="common">Mediterranean spider crab</name>
    <name type="synonym">Cancer squinado</name>
    <dbReference type="NCBI Taxonomy" id="99391"/>
    <lineage>
        <taxon>Eukaryota</taxon>
        <taxon>Metazoa</taxon>
        <taxon>Ecdysozoa</taxon>
        <taxon>Arthropoda</taxon>
        <taxon>Crustacea</taxon>
        <taxon>Multicrustacea</taxon>
        <taxon>Malacostraca</taxon>
        <taxon>Eumalacostraca</taxon>
        <taxon>Eucarida</taxon>
        <taxon>Decapoda</taxon>
        <taxon>Pleocyemata</taxon>
        <taxon>Brachyura</taxon>
        <taxon>Eubrachyura</taxon>
        <taxon>Majoidea</taxon>
        <taxon>Majidae</taxon>
        <taxon>Maja</taxon>
    </lineage>
</organism>
<accession>P82308</accession>